<sequence>MAELATIARPYADALFKASTQQGADLSGTVAWAEELAAIAANPQLRQLADDPKVTDEQLFDVISGVAGSALPDAARNFLRVIIENGRLQALPEVAAQFRSLVNRAGGSSDAVVQSAFPIDAAALAALGTSLEKRFGRKLNLSVQQDQSLIGGIRVVVGDEVLDTSVKARLEQMKAALIA</sequence>
<accession>A9BPU4</accession>
<protein>
    <recommendedName>
        <fullName evidence="1">ATP synthase subunit delta</fullName>
    </recommendedName>
    <alternativeName>
        <fullName evidence="1">ATP synthase F(1) sector subunit delta</fullName>
    </alternativeName>
    <alternativeName>
        <fullName evidence="1">F-type ATPase subunit delta</fullName>
        <shortName evidence="1">F-ATPase subunit delta</shortName>
    </alternativeName>
</protein>
<evidence type="ECO:0000255" key="1">
    <source>
        <dbReference type="HAMAP-Rule" id="MF_01416"/>
    </source>
</evidence>
<name>ATPD_DELAS</name>
<gene>
    <name evidence="1" type="primary">atpH</name>
    <name type="ordered locus">Daci_0417</name>
</gene>
<reference key="1">
    <citation type="submission" date="2007-11" db="EMBL/GenBank/DDBJ databases">
        <title>Complete sequence of Delftia acidovorans DSM 14801 / SPH-1.</title>
        <authorList>
            <person name="Copeland A."/>
            <person name="Lucas S."/>
            <person name="Lapidus A."/>
            <person name="Barry K."/>
            <person name="Glavina del Rio T."/>
            <person name="Dalin E."/>
            <person name="Tice H."/>
            <person name="Pitluck S."/>
            <person name="Lowry S."/>
            <person name="Clum A."/>
            <person name="Schmutz J."/>
            <person name="Larimer F."/>
            <person name="Land M."/>
            <person name="Hauser L."/>
            <person name="Kyrpides N."/>
            <person name="Kim E."/>
            <person name="Schleheck D."/>
            <person name="Richardson P."/>
        </authorList>
    </citation>
    <scope>NUCLEOTIDE SEQUENCE [LARGE SCALE GENOMIC DNA]</scope>
    <source>
        <strain>DSM 14801 / SPH-1</strain>
    </source>
</reference>
<comment type="function">
    <text evidence="1">F(1)F(0) ATP synthase produces ATP from ADP in the presence of a proton or sodium gradient. F-type ATPases consist of two structural domains, F(1) containing the extramembraneous catalytic core and F(0) containing the membrane proton channel, linked together by a central stalk and a peripheral stalk. During catalysis, ATP synthesis in the catalytic domain of F(1) is coupled via a rotary mechanism of the central stalk subunits to proton translocation.</text>
</comment>
<comment type="function">
    <text evidence="1">This protein is part of the stalk that links CF(0) to CF(1). It either transmits conformational changes from CF(0) to CF(1) or is implicated in proton conduction.</text>
</comment>
<comment type="subunit">
    <text evidence="1">F-type ATPases have 2 components, F(1) - the catalytic core - and F(0) - the membrane proton channel. F(1) has five subunits: alpha(3), beta(3), gamma(1), delta(1), epsilon(1). F(0) has three main subunits: a(1), b(2) and c(10-14). The alpha and beta chains form an alternating ring which encloses part of the gamma chain. F(1) is attached to F(0) by a central stalk formed by the gamma and epsilon chains, while a peripheral stalk is formed by the delta and b chains.</text>
</comment>
<comment type="subcellular location">
    <subcellularLocation>
        <location evidence="1">Cell inner membrane</location>
        <topology evidence="1">Peripheral membrane protein</topology>
    </subcellularLocation>
</comment>
<comment type="similarity">
    <text evidence="1">Belongs to the ATPase delta chain family.</text>
</comment>
<keyword id="KW-0066">ATP synthesis</keyword>
<keyword id="KW-0997">Cell inner membrane</keyword>
<keyword id="KW-1003">Cell membrane</keyword>
<keyword id="KW-0139">CF(1)</keyword>
<keyword id="KW-0375">Hydrogen ion transport</keyword>
<keyword id="KW-0406">Ion transport</keyword>
<keyword id="KW-0472">Membrane</keyword>
<keyword id="KW-1185">Reference proteome</keyword>
<keyword id="KW-0813">Transport</keyword>
<organism>
    <name type="scientific">Delftia acidovorans (strain DSM 14801 / SPH-1)</name>
    <dbReference type="NCBI Taxonomy" id="398578"/>
    <lineage>
        <taxon>Bacteria</taxon>
        <taxon>Pseudomonadati</taxon>
        <taxon>Pseudomonadota</taxon>
        <taxon>Betaproteobacteria</taxon>
        <taxon>Burkholderiales</taxon>
        <taxon>Comamonadaceae</taxon>
        <taxon>Delftia</taxon>
    </lineage>
</organism>
<proteinExistence type="inferred from homology"/>
<feature type="chain" id="PRO_1000184690" description="ATP synthase subunit delta">
    <location>
        <begin position="1"/>
        <end position="179"/>
    </location>
</feature>
<dbReference type="EMBL" id="CP000884">
    <property type="protein sequence ID" value="ABX33063.1"/>
    <property type="molecule type" value="Genomic_DNA"/>
</dbReference>
<dbReference type="RefSeq" id="WP_012202354.1">
    <property type="nucleotide sequence ID" value="NC_010002.1"/>
</dbReference>
<dbReference type="SMR" id="A9BPU4"/>
<dbReference type="STRING" id="398578.Daci_0417"/>
<dbReference type="KEGG" id="dac:Daci_0417"/>
<dbReference type="eggNOG" id="COG0712">
    <property type="taxonomic scope" value="Bacteria"/>
</dbReference>
<dbReference type="HOGENOM" id="CLU_085114_3_0_4"/>
<dbReference type="Proteomes" id="UP000000784">
    <property type="component" value="Chromosome"/>
</dbReference>
<dbReference type="GO" id="GO:0005886">
    <property type="term" value="C:plasma membrane"/>
    <property type="evidence" value="ECO:0007669"/>
    <property type="project" value="UniProtKB-SubCell"/>
</dbReference>
<dbReference type="GO" id="GO:0045259">
    <property type="term" value="C:proton-transporting ATP synthase complex"/>
    <property type="evidence" value="ECO:0007669"/>
    <property type="project" value="UniProtKB-KW"/>
</dbReference>
<dbReference type="GO" id="GO:0046933">
    <property type="term" value="F:proton-transporting ATP synthase activity, rotational mechanism"/>
    <property type="evidence" value="ECO:0007669"/>
    <property type="project" value="UniProtKB-UniRule"/>
</dbReference>
<dbReference type="Gene3D" id="1.10.520.20">
    <property type="entry name" value="N-terminal domain of the delta subunit of the F1F0-ATP synthase"/>
    <property type="match status" value="1"/>
</dbReference>
<dbReference type="HAMAP" id="MF_01416">
    <property type="entry name" value="ATP_synth_delta_bact"/>
    <property type="match status" value="1"/>
</dbReference>
<dbReference type="InterPro" id="IPR026015">
    <property type="entry name" value="ATP_synth_OSCP/delta_N_sf"/>
</dbReference>
<dbReference type="InterPro" id="IPR000711">
    <property type="entry name" value="ATPase_OSCP/dsu"/>
</dbReference>
<dbReference type="NCBIfam" id="TIGR01145">
    <property type="entry name" value="ATP_synt_delta"/>
    <property type="match status" value="1"/>
</dbReference>
<dbReference type="NCBIfam" id="NF004402">
    <property type="entry name" value="PRK05758.2-2"/>
    <property type="match status" value="1"/>
</dbReference>
<dbReference type="PANTHER" id="PTHR11910">
    <property type="entry name" value="ATP SYNTHASE DELTA CHAIN"/>
    <property type="match status" value="1"/>
</dbReference>
<dbReference type="Pfam" id="PF00213">
    <property type="entry name" value="OSCP"/>
    <property type="match status" value="1"/>
</dbReference>
<dbReference type="PRINTS" id="PR00125">
    <property type="entry name" value="ATPASEDELTA"/>
</dbReference>
<dbReference type="SUPFAM" id="SSF47928">
    <property type="entry name" value="N-terminal domain of the delta subunit of the F1F0-ATP synthase"/>
    <property type="match status" value="1"/>
</dbReference>